<evidence type="ECO:0000255" key="1">
    <source>
        <dbReference type="HAMAP-Rule" id="MF_00358"/>
    </source>
</evidence>
<evidence type="ECO:0000256" key="2">
    <source>
        <dbReference type="SAM" id="MobiDB-lite"/>
    </source>
</evidence>
<evidence type="ECO:0000305" key="3"/>
<dbReference type="EMBL" id="BA000045">
    <property type="protein sequence ID" value="BAC90577.1"/>
    <property type="molecule type" value="Genomic_DNA"/>
</dbReference>
<dbReference type="RefSeq" id="NP_925582.1">
    <property type="nucleotide sequence ID" value="NC_005125.1"/>
</dbReference>
<dbReference type="RefSeq" id="WP_011142630.1">
    <property type="nucleotide sequence ID" value="NC_005125.1"/>
</dbReference>
<dbReference type="SMR" id="Q7NHA1"/>
<dbReference type="STRING" id="251221.gene:10760137"/>
<dbReference type="EnsemblBacteria" id="BAC90577">
    <property type="protein sequence ID" value="BAC90577"/>
    <property type="gene ID" value="BAC90577"/>
</dbReference>
<dbReference type="KEGG" id="gvi:gsl2636"/>
<dbReference type="PATRIC" id="fig|251221.4.peg.2673"/>
<dbReference type="eggNOG" id="COG0828">
    <property type="taxonomic scope" value="Bacteria"/>
</dbReference>
<dbReference type="HOGENOM" id="CLU_159258_3_1_3"/>
<dbReference type="InParanoid" id="Q7NHA1"/>
<dbReference type="OrthoDB" id="9799244at2"/>
<dbReference type="PhylomeDB" id="Q7NHA1"/>
<dbReference type="Proteomes" id="UP000000557">
    <property type="component" value="Chromosome"/>
</dbReference>
<dbReference type="GO" id="GO:1990904">
    <property type="term" value="C:ribonucleoprotein complex"/>
    <property type="evidence" value="ECO:0007669"/>
    <property type="project" value="UniProtKB-KW"/>
</dbReference>
<dbReference type="GO" id="GO:0005840">
    <property type="term" value="C:ribosome"/>
    <property type="evidence" value="ECO:0007669"/>
    <property type="project" value="UniProtKB-KW"/>
</dbReference>
<dbReference type="GO" id="GO:0003735">
    <property type="term" value="F:structural constituent of ribosome"/>
    <property type="evidence" value="ECO:0007669"/>
    <property type="project" value="InterPro"/>
</dbReference>
<dbReference type="GO" id="GO:0006412">
    <property type="term" value="P:translation"/>
    <property type="evidence" value="ECO:0007669"/>
    <property type="project" value="UniProtKB-UniRule"/>
</dbReference>
<dbReference type="Gene3D" id="1.20.5.1150">
    <property type="entry name" value="Ribosomal protein S8"/>
    <property type="match status" value="1"/>
</dbReference>
<dbReference type="HAMAP" id="MF_00358">
    <property type="entry name" value="Ribosomal_bS21"/>
    <property type="match status" value="1"/>
</dbReference>
<dbReference type="InterPro" id="IPR001911">
    <property type="entry name" value="Ribosomal_bS21"/>
</dbReference>
<dbReference type="InterPro" id="IPR018278">
    <property type="entry name" value="Ribosomal_bS21_CS"/>
</dbReference>
<dbReference type="InterPro" id="IPR038380">
    <property type="entry name" value="Ribosomal_bS21_sf"/>
</dbReference>
<dbReference type="NCBIfam" id="TIGR00030">
    <property type="entry name" value="S21p"/>
    <property type="match status" value="1"/>
</dbReference>
<dbReference type="PANTHER" id="PTHR21109">
    <property type="entry name" value="MITOCHONDRIAL 28S RIBOSOMAL PROTEIN S21"/>
    <property type="match status" value="1"/>
</dbReference>
<dbReference type="PANTHER" id="PTHR21109:SF22">
    <property type="entry name" value="SMALL RIBOSOMAL SUBUNIT PROTEIN BS21"/>
    <property type="match status" value="1"/>
</dbReference>
<dbReference type="Pfam" id="PF01165">
    <property type="entry name" value="Ribosomal_S21"/>
    <property type="match status" value="1"/>
</dbReference>
<dbReference type="PRINTS" id="PR00976">
    <property type="entry name" value="RIBOSOMALS21"/>
</dbReference>
<dbReference type="PROSITE" id="PS01181">
    <property type="entry name" value="RIBOSOMAL_S21"/>
    <property type="match status" value="1"/>
</dbReference>
<name>RS212_GLOVI</name>
<comment type="similarity">
    <text evidence="1">Belongs to the bacterial ribosomal protein bS21 family.</text>
</comment>
<sequence>MTEVRLGENESIESALKRFKKKIQKAGILSEIKRRERYEKPSARRKRKAEAARKRRR</sequence>
<organism>
    <name type="scientific">Gloeobacter violaceus (strain ATCC 29082 / PCC 7421)</name>
    <dbReference type="NCBI Taxonomy" id="251221"/>
    <lineage>
        <taxon>Bacteria</taxon>
        <taxon>Bacillati</taxon>
        <taxon>Cyanobacteriota</taxon>
        <taxon>Cyanophyceae</taxon>
        <taxon>Gloeobacterales</taxon>
        <taxon>Gloeobacteraceae</taxon>
        <taxon>Gloeobacter</taxon>
    </lineage>
</organism>
<feature type="chain" id="PRO_0000266684" description="Small ribosomal subunit protein bS21B">
    <location>
        <begin position="1"/>
        <end position="57"/>
    </location>
</feature>
<feature type="region of interest" description="Disordered" evidence="2">
    <location>
        <begin position="37"/>
        <end position="57"/>
    </location>
</feature>
<feature type="compositionally biased region" description="Basic residues" evidence="2">
    <location>
        <begin position="43"/>
        <end position="57"/>
    </location>
</feature>
<accession>Q7NHA1</accession>
<keyword id="KW-1185">Reference proteome</keyword>
<keyword id="KW-0687">Ribonucleoprotein</keyword>
<keyword id="KW-0689">Ribosomal protein</keyword>
<protein>
    <recommendedName>
        <fullName evidence="1">Small ribosomal subunit protein bS21B</fullName>
    </recommendedName>
    <alternativeName>
        <fullName evidence="3">30S ribosomal protein S21 2</fullName>
    </alternativeName>
</protein>
<proteinExistence type="inferred from homology"/>
<gene>
    <name evidence="1" type="primary">rpsU2</name>
    <name evidence="1" type="synonym">rps21-2</name>
    <name type="ordered locus">gsl2636</name>
</gene>
<reference key="1">
    <citation type="journal article" date="2003" name="DNA Res.">
        <title>Complete genome structure of Gloeobacter violaceus PCC 7421, a cyanobacterium that lacks thylakoids.</title>
        <authorList>
            <person name="Nakamura Y."/>
            <person name="Kaneko T."/>
            <person name="Sato S."/>
            <person name="Mimuro M."/>
            <person name="Miyashita H."/>
            <person name="Tsuchiya T."/>
            <person name="Sasamoto S."/>
            <person name="Watanabe A."/>
            <person name="Kawashima K."/>
            <person name="Kishida Y."/>
            <person name="Kiyokawa C."/>
            <person name="Kohara M."/>
            <person name="Matsumoto M."/>
            <person name="Matsuno A."/>
            <person name="Nakazaki N."/>
            <person name="Shimpo S."/>
            <person name="Takeuchi C."/>
            <person name="Yamada M."/>
            <person name="Tabata S."/>
        </authorList>
    </citation>
    <scope>NUCLEOTIDE SEQUENCE [LARGE SCALE GENOMIC DNA]</scope>
    <source>
        <strain>ATCC 29082 / PCC 7421</strain>
    </source>
</reference>